<gene>
    <name type="primary">yohJ</name>
    <name type="ordered locus">Z3396</name>
    <name type="ordered locus">ECs3033</name>
</gene>
<protein>
    <recommendedName>
        <fullName>UPF0299 membrane protein YohJ</fullName>
    </recommendedName>
</protein>
<dbReference type="EMBL" id="AE005174">
    <property type="protein sequence ID" value="AAG57279.1"/>
    <property type="molecule type" value="Genomic_DNA"/>
</dbReference>
<dbReference type="EMBL" id="BA000007">
    <property type="protein sequence ID" value="BAB36456.1"/>
    <property type="molecule type" value="Genomic_DNA"/>
</dbReference>
<dbReference type="PIR" id="A98008">
    <property type="entry name" value="A98008"/>
</dbReference>
<dbReference type="PIR" id="C85852">
    <property type="entry name" value="C85852"/>
</dbReference>
<dbReference type="RefSeq" id="NP_311060.1">
    <property type="nucleotide sequence ID" value="NC_002695.1"/>
</dbReference>
<dbReference type="RefSeq" id="WP_001299855.1">
    <property type="nucleotide sequence ID" value="NZ_VOAI01000001.1"/>
</dbReference>
<dbReference type="SMR" id="Q8X653"/>
<dbReference type="STRING" id="155864.Z3396"/>
<dbReference type="GeneID" id="916737"/>
<dbReference type="KEGG" id="ece:Z3396"/>
<dbReference type="KEGG" id="ecs:ECs_3033"/>
<dbReference type="PATRIC" id="fig|386585.9.peg.3158"/>
<dbReference type="eggNOG" id="COG1380">
    <property type="taxonomic scope" value="Bacteria"/>
</dbReference>
<dbReference type="HOGENOM" id="CLU_113736_1_1_6"/>
<dbReference type="OMA" id="MSVMFIP"/>
<dbReference type="Proteomes" id="UP000000558">
    <property type="component" value="Chromosome"/>
</dbReference>
<dbReference type="Proteomes" id="UP000002519">
    <property type="component" value="Chromosome"/>
</dbReference>
<dbReference type="GO" id="GO:0005886">
    <property type="term" value="C:plasma membrane"/>
    <property type="evidence" value="ECO:0007669"/>
    <property type="project" value="UniProtKB-SubCell"/>
</dbReference>
<dbReference type="HAMAP" id="MF_01144">
    <property type="entry name" value="UPF0299"/>
    <property type="match status" value="1"/>
</dbReference>
<dbReference type="InterPro" id="IPR005538">
    <property type="entry name" value="LrgA/CidA"/>
</dbReference>
<dbReference type="InterPro" id="IPR022957">
    <property type="entry name" value="Uncharacterised_UPF0299"/>
</dbReference>
<dbReference type="NCBIfam" id="NF002494">
    <property type="entry name" value="PRK01821.1"/>
    <property type="match status" value="1"/>
</dbReference>
<dbReference type="PANTHER" id="PTHR33931">
    <property type="entry name" value="HOLIN-LIKE PROTEIN CIDA-RELATED"/>
    <property type="match status" value="1"/>
</dbReference>
<dbReference type="PANTHER" id="PTHR33931:SF5">
    <property type="entry name" value="UPF0299 MEMBRANE PROTEIN YOHJ"/>
    <property type="match status" value="1"/>
</dbReference>
<dbReference type="Pfam" id="PF03788">
    <property type="entry name" value="LrgA"/>
    <property type="match status" value="1"/>
</dbReference>
<reference key="1">
    <citation type="journal article" date="2001" name="Nature">
        <title>Genome sequence of enterohaemorrhagic Escherichia coli O157:H7.</title>
        <authorList>
            <person name="Perna N.T."/>
            <person name="Plunkett G. III"/>
            <person name="Burland V."/>
            <person name="Mau B."/>
            <person name="Glasner J.D."/>
            <person name="Rose D.J."/>
            <person name="Mayhew G.F."/>
            <person name="Evans P.S."/>
            <person name="Gregor J."/>
            <person name="Kirkpatrick H.A."/>
            <person name="Posfai G."/>
            <person name="Hackett J."/>
            <person name="Klink S."/>
            <person name="Boutin A."/>
            <person name="Shao Y."/>
            <person name="Miller L."/>
            <person name="Grotbeck E.J."/>
            <person name="Davis N.W."/>
            <person name="Lim A."/>
            <person name="Dimalanta E.T."/>
            <person name="Potamousis K."/>
            <person name="Apodaca J."/>
            <person name="Anantharaman T.S."/>
            <person name="Lin J."/>
            <person name="Yen G."/>
            <person name="Schwartz D.C."/>
            <person name="Welch R.A."/>
            <person name="Blattner F.R."/>
        </authorList>
    </citation>
    <scope>NUCLEOTIDE SEQUENCE [LARGE SCALE GENOMIC DNA]</scope>
    <source>
        <strain>O157:H7 / EDL933 / ATCC 700927 / EHEC</strain>
    </source>
</reference>
<reference key="2">
    <citation type="journal article" date="2001" name="DNA Res.">
        <title>Complete genome sequence of enterohemorrhagic Escherichia coli O157:H7 and genomic comparison with a laboratory strain K-12.</title>
        <authorList>
            <person name="Hayashi T."/>
            <person name="Makino K."/>
            <person name="Ohnishi M."/>
            <person name="Kurokawa K."/>
            <person name="Ishii K."/>
            <person name="Yokoyama K."/>
            <person name="Han C.-G."/>
            <person name="Ohtsubo E."/>
            <person name="Nakayama K."/>
            <person name="Murata T."/>
            <person name="Tanaka M."/>
            <person name="Tobe T."/>
            <person name="Iida T."/>
            <person name="Takami H."/>
            <person name="Honda T."/>
            <person name="Sasakawa C."/>
            <person name="Ogasawara N."/>
            <person name="Yasunaga T."/>
            <person name="Kuhara S."/>
            <person name="Shiba T."/>
            <person name="Hattori M."/>
            <person name="Shinagawa H."/>
        </authorList>
    </citation>
    <scope>NUCLEOTIDE SEQUENCE [LARGE SCALE GENOMIC DNA]</scope>
    <source>
        <strain>O157:H7 / Sakai / RIMD 0509952 / EHEC</strain>
    </source>
</reference>
<evidence type="ECO:0000250" key="1"/>
<evidence type="ECO:0000255" key="2"/>
<evidence type="ECO:0000305" key="3"/>
<accession>Q8X653</accession>
<organism>
    <name type="scientific">Escherichia coli O157:H7</name>
    <dbReference type="NCBI Taxonomy" id="83334"/>
    <lineage>
        <taxon>Bacteria</taxon>
        <taxon>Pseudomonadati</taxon>
        <taxon>Pseudomonadota</taxon>
        <taxon>Gammaproteobacteria</taxon>
        <taxon>Enterobacterales</taxon>
        <taxon>Enterobacteriaceae</taxon>
        <taxon>Escherichia</taxon>
    </lineage>
</organism>
<comment type="subcellular location">
    <subcellularLocation>
        <location evidence="1">Cell inner membrane</location>
        <topology evidence="1">Multi-pass membrane protein</topology>
    </subcellularLocation>
</comment>
<comment type="similarity">
    <text evidence="3">Belongs to the UPF0299 family.</text>
</comment>
<feature type="chain" id="PRO_0000072808" description="UPF0299 membrane protein YohJ">
    <location>
        <begin position="1"/>
        <end position="132"/>
    </location>
</feature>
<feature type="topological domain" description="Periplasmic" evidence="2">
    <location>
        <begin position="1"/>
        <end position="6"/>
    </location>
</feature>
<feature type="transmembrane region" description="Helical" evidence="2">
    <location>
        <begin position="7"/>
        <end position="27"/>
    </location>
</feature>
<feature type="topological domain" description="Cytoplasmic" evidence="2">
    <location>
        <begin position="28"/>
        <end position="30"/>
    </location>
</feature>
<feature type="transmembrane region" description="Helical" evidence="2">
    <location>
        <begin position="31"/>
        <end position="51"/>
    </location>
</feature>
<feature type="topological domain" description="Periplasmic" evidence="2">
    <location>
        <begin position="52"/>
        <end position="62"/>
    </location>
</feature>
<feature type="transmembrane region" description="Helical" evidence="2">
    <location>
        <begin position="63"/>
        <end position="83"/>
    </location>
</feature>
<feature type="topological domain" description="Cytoplasmic" evidence="2">
    <location>
        <begin position="84"/>
        <end position="92"/>
    </location>
</feature>
<feature type="transmembrane region" description="Helical" evidence="2">
    <location>
        <begin position="93"/>
        <end position="113"/>
    </location>
</feature>
<feature type="topological domain" description="Periplasmic" evidence="2">
    <location>
        <begin position="114"/>
        <end position="132"/>
    </location>
</feature>
<sequence>MSKTLNIIWQYLRAFVLIYACLYAGIFIASLLPVTIPGSIIGMLILFVLLALQILPAKWVNPGCYVLIRYMALLFVPIGVGVMQYFDLLRAQFGPVVVSCAISTLVVFLVVSWSSQLVHGERKVVGQKGSEE</sequence>
<name>YOHJ_ECO57</name>
<proteinExistence type="inferred from homology"/>
<keyword id="KW-0997">Cell inner membrane</keyword>
<keyword id="KW-1003">Cell membrane</keyword>
<keyword id="KW-0472">Membrane</keyword>
<keyword id="KW-1185">Reference proteome</keyword>
<keyword id="KW-0812">Transmembrane</keyword>
<keyword id="KW-1133">Transmembrane helix</keyword>